<proteinExistence type="evidence at transcript level"/>
<comment type="function">
    <text evidence="2 4 5">Catalytic tRNA acetyltransferase subunit of the elongator complex which is required for multiple tRNA modifications, including mcm5U (5-methoxycarbonylmethyl uridine), mcm5s2U (5-methoxycarbonylmethyl-2-thiouridine), and ncm5U (5-carbamoylmethyl uridine) (By similarity). In the elongator complex, acts as a tRNA uridine(34) acetyltransferase by mediating formation of carboxymethyluridine in the wobble base at position 34 in tRNAs (By similarity). Stabilizes transcriptional repressor snai1 by inhibiting its ubiquitination which promotes neural crest cell migration (By similarity).</text>
</comment>
<comment type="catalytic activity">
    <reaction evidence="2">
        <text>uridine(34) in tRNA + acetyl-CoA + S-adenosyl-L-methionine + H2O = 5-(carboxymethyl)uridine(34) in tRNA + 5'-deoxyadenosine + L-methionine + CoA + 2 H(+)</text>
        <dbReference type="Rhea" id="RHEA:61020"/>
        <dbReference type="Rhea" id="RHEA-COMP:10407"/>
        <dbReference type="Rhea" id="RHEA-COMP:11727"/>
        <dbReference type="ChEBI" id="CHEBI:15377"/>
        <dbReference type="ChEBI" id="CHEBI:15378"/>
        <dbReference type="ChEBI" id="CHEBI:17319"/>
        <dbReference type="ChEBI" id="CHEBI:57287"/>
        <dbReference type="ChEBI" id="CHEBI:57288"/>
        <dbReference type="ChEBI" id="CHEBI:57844"/>
        <dbReference type="ChEBI" id="CHEBI:59789"/>
        <dbReference type="ChEBI" id="CHEBI:65315"/>
        <dbReference type="ChEBI" id="CHEBI:74882"/>
        <dbReference type="EC" id="2.3.1.311"/>
    </reaction>
    <physiologicalReaction direction="left-to-right" evidence="2">
        <dbReference type="Rhea" id="RHEA:61021"/>
    </physiologicalReaction>
</comment>
<comment type="cofactor">
    <cofactor evidence="3">
        <name>[4Fe-4S] cluster</name>
        <dbReference type="ChEBI" id="CHEBI:49883"/>
    </cofactor>
    <text evidence="3">Binds 1 [4Fe-4S] cluster. The cluster is coordinated with 3 cysteines and an exchangeable S-adenosyl-L-methionine.</text>
</comment>
<comment type="pathway">
    <text evidence="5">tRNA modification; 5-methoxycarbonylmethyl-2-thiouridine-tRNA biosynthesis.</text>
</comment>
<comment type="subunit">
    <text evidence="4 5">Component of the elongator complex (By similarity). Interacts with transcriptional repressors snai1 and snai2; interaction with snai1 inhibits its ubiquitination and stabilizes it (By similarity).</text>
</comment>
<comment type="subcellular location">
    <subcellularLocation>
        <location evidence="5">Cytoplasm</location>
    </subcellularLocation>
    <subcellularLocation>
        <location evidence="5">Nucleus</location>
    </subcellularLocation>
</comment>
<comment type="similarity">
    <text evidence="8">Belongs to the ELP3 family.</text>
</comment>
<comment type="caution">
    <text evidence="5">The elongator complex was originally thought to play a role in transcription elongation. However, it is no longer thought to play a direct role in this process and its primary function is thought to be in tRNA modification.</text>
</comment>
<evidence type="ECO:0000250" key="1">
    <source>
        <dbReference type="UniProtKB" id="A0A1C7D1B7"/>
    </source>
</evidence>
<evidence type="ECO:0000250" key="2">
    <source>
        <dbReference type="UniProtKB" id="D5VRB9"/>
    </source>
</evidence>
<evidence type="ECO:0000250" key="3">
    <source>
        <dbReference type="UniProtKB" id="Q02908"/>
    </source>
</evidence>
<evidence type="ECO:0000250" key="4">
    <source>
        <dbReference type="UniProtKB" id="Q5HZM6"/>
    </source>
</evidence>
<evidence type="ECO:0000250" key="5">
    <source>
        <dbReference type="UniProtKB" id="Q9H9T3"/>
    </source>
</evidence>
<evidence type="ECO:0000255" key="6">
    <source>
        <dbReference type="PROSITE-ProRule" id="PRU00532"/>
    </source>
</evidence>
<evidence type="ECO:0000255" key="7">
    <source>
        <dbReference type="PROSITE-ProRule" id="PRU01266"/>
    </source>
</evidence>
<evidence type="ECO:0000305" key="8"/>
<accession>Q6NVL5</accession>
<gene>
    <name evidence="5" type="primary">elp3</name>
</gene>
<sequence length="549" mass="62361">MKPDRGPRGKQSQAELMMMTVADVIKQLVEAHEQGKDVNLNKLKTKTSAKYGLSAQPRLVDIIAAVPPQYRKILVPKLKAKPIRTASGIAVVAVMCKPHRCPHINFTGNICVYCPGGPDSDFEYSTQSYTGYEPTSMRAIRARYDPYLQTRHRVEQLKQLGHSVDKVEFIVMGGTFMALSEDYRDFFIRNLHDALSGHTSNSVSEAVRYSERSNTKCVGITIETRPDYCLKRHLSDMLSYGCTRLEIGVQSVYEDVARDTNRGHTVKAVCESFHMAKDAGFKVVSHMMPDLPNVGLERDTEQFIEFFENPAFRPDGMKLYPTLVIRGTGLYELWKTGRYRSYSPSTLVDLVARILALVPPWTRVYRVQRDIPMPLVSSGVEHGNLRELALARMKDLGTECRDVRTREVGIQEIHHKVRPYQVELIRRDYVANGGWETFLSYEDPEQDILIGLLRLRKCSEQSFRPELKGGVSIVRELHVYGSVVPISSRDPSKFQHQGFGMLLMEEAERIAREEHGSCKIAVISGVGTRNYYRKLGYELEGPYMVKKLD</sequence>
<dbReference type="EC" id="2.3.1.311" evidence="2"/>
<dbReference type="EMBL" id="BC067990">
    <property type="protein sequence ID" value="AAH67990.1"/>
    <property type="molecule type" value="mRNA"/>
</dbReference>
<dbReference type="RefSeq" id="NP_001001215.1">
    <property type="nucleotide sequence ID" value="NM_001001215.1"/>
</dbReference>
<dbReference type="SMR" id="Q6NVL5"/>
<dbReference type="FunCoup" id="Q6NVL5">
    <property type="interactions" value="3662"/>
</dbReference>
<dbReference type="STRING" id="8364.ENSXETP00000003917"/>
<dbReference type="PaxDb" id="8364-ENSXETP00000045738"/>
<dbReference type="DNASU" id="407885"/>
<dbReference type="GeneID" id="407885"/>
<dbReference type="KEGG" id="xtr:407885"/>
<dbReference type="AGR" id="Xenbase:XB-GENE-957348"/>
<dbReference type="CTD" id="55140"/>
<dbReference type="Xenbase" id="XB-GENE-957348">
    <property type="gene designation" value="elp3"/>
</dbReference>
<dbReference type="eggNOG" id="KOG2535">
    <property type="taxonomic scope" value="Eukaryota"/>
</dbReference>
<dbReference type="InParanoid" id="Q6NVL5"/>
<dbReference type="OMA" id="TFETRPD"/>
<dbReference type="OrthoDB" id="10265243at2759"/>
<dbReference type="UniPathway" id="UPA00988"/>
<dbReference type="Proteomes" id="UP000008143">
    <property type="component" value="Chromosome 5"/>
</dbReference>
<dbReference type="GO" id="GO:0005737">
    <property type="term" value="C:cytoplasm"/>
    <property type="evidence" value="ECO:0000250"/>
    <property type="project" value="UniProtKB"/>
</dbReference>
<dbReference type="GO" id="GO:0005634">
    <property type="term" value="C:nucleus"/>
    <property type="evidence" value="ECO:0007669"/>
    <property type="project" value="UniProtKB-SubCell"/>
</dbReference>
<dbReference type="GO" id="GO:0051539">
    <property type="term" value="F:4 iron, 4 sulfur cluster binding"/>
    <property type="evidence" value="ECO:0007669"/>
    <property type="project" value="UniProtKB-KW"/>
</dbReference>
<dbReference type="GO" id="GO:0046872">
    <property type="term" value="F:metal ion binding"/>
    <property type="evidence" value="ECO:0007669"/>
    <property type="project" value="UniProtKB-KW"/>
</dbReference>
<dbReference type="GO" id="GO:0008607">
    <property type="term" value="F:phosphorylase kinase regulator activity"/>
    <property type="evidence" value="ECO:0000250"/>
    <property type="project" value="UniProtKB"/>
</dbReference>
<dbReference type="GO" id="GO:0000049">
    <property type="term" value="F:tRNA binding"/>
    <property type="evidence" value="ECO:0007669"/>
    <property type="project" value="UniProtKB-KW"/>
</dbReference>
<dbReference type="GO" id="GO:0106261">
    <property type="term" value="F:tRNA uridine(34) acetyltransferase activity"/>
    <property type="evidence" value="ECO:0000250"/>
    <property type="project" value="UniProtKB"/>
</dbReference>
<dbReference type="GO" id="GO:0031397">
    <property type="term" value="P:negative regulation of protein ubiquitination"/>
    <property type="evidence" value="ECO:0000250"/>
    <property type="project" value="UniProtKB"/>
</dbReference>
<dbReference type="GO" id="GO:0001755">
    <property type="term" value="P:neural crest cell migration"/>
    <property type="evidence" value="ECO:0000250"/>
    <property type="project" value="UniProtKB"/>
</dbReference>
<dbReference type="GO" id="GO:0050821">
    <property type="term" value="P:protein stabilization"/>
    <property type="evidence" value="ECO:0000250"/>
    <property type="project" value="UniProtKB"/>
</dbReference>
<dbReference type="GO" id="GO:0006357">
    <property type="term" value="P:regulation of transcription by RNA polymerase II"/>
    <property type="evidence" value="ECO:0000250"/>
    <property type="project" value="UniProtKB"/>
</dbReference>
<dbReference type="GO" id="GO:0002098">
    <property type="term" value="P:tRNA wobble uridine modification"/>
    <property type="evidence" value="ECO:0000250"/>
    <property type="project" value="UniProtKB"/>
</dbReference>
<dbReference type="CDD" id="cd01335">
    <property type="entry name" value="Radical_SAM"/>
    <property type="match status" value="1"/>
</dbReference>
<dbReference type="FunFam" id="3.40.630.30:FF:000003">
    <property type="entry name" value="Elongator complex protein 3"/>
    <property type="match status" value="1"/>
</dbReference>
<dbReference type="Gene3D" id="3.40.630.30">
    <property type="match status" value="1"/>
</dbReference>
<dbReference type="InterPro" id="IPR016181">
    <property type="entry name" value="Acyl_CoA_acyltransferase"/>
</dbReference>
<dbReference type="InterPro" id="IPR039661">
    <property type="entry name" value="ELP3"/>
</dbReference>
<dbReference type="InterPro" id="IPR034687">
    <property type="entry name" value="ELP3-like"/>
</dbReference>
<dbReference type="InterPro" id="IPR056591">
    <property type="entry name" value="ELP3-like_N"/>
</dbReference>
<dbReference type="InterPro" id="IPR006638">
    <property type="entry name" value="Elp3/MiaA/NifB-like_rSAM"/>
</dbReference>
<dbReference type="InterPro" id="IPR000182">
    <property type="entry name" value="GNAT_dom"/>
</dbReference>
<dbReference type="InterPro" id="IPR032432">
    <property type="entry name" value="Radical_SAM_C"/>
</dbReference>
<dbReference type="InterPro" id="IPR007197">
    <property type="entry name" value="rSAM"/>
</dbReference>
<dbReference type="NCBIfam" id="TIGR01211">
    <property type="entry name" value="ELP3"/>
    <property type="match status" value="1"/>
</dbReference>
<dbReference type="PANTHER" id="PTHR11135:SF0">
    <property type="entry name" value="ELONGATOR COMPLEX PROTEIN 3"/>
    <property type="match status" value="1"/>
</dbReference>
<dbReference type="PANTHER" id="PTHR11135">
    <property type="entry name" value="HISTONE ACETYLTRANSFERASE-RELATED"/>
    <property type="match status" value="1"/>
</dbReference>
<dbReference type="Pfam" id="PF23613">
    <property type="entry name" value="ELP3_N"/>
    <property type="match status" value="1"/>
</dbReference>
<dbReference type="Pfam" id="PF04055">
    <property type="entry name" value="Radical_SAM"/>
    <property type="match status" value="1"/>
</dbReference>
<dbReference type="Pfam" id="PF16199">
    <property type="entry name" value="Radical_SAM_C"/>
    <property type="match status" value="1"/>
</dbReference>
<dbReference type="PIRSF" id="PIRSF005669">
    <property type="entry name" value="Hist_AcTrfase_ELP3"/>
    <property type="match status" value="1"/>
</dbReference>
<dbReference type="SFLD" id="SFLDF00344">
    <property type="entry name" value="ELP3-like"/>
    <property type="match status" value="1"/>
</dbReference>
<dbReference type="SFLD" id="SFLDS00029">
    <property type="entry name" value="Radical_SAM"/>
    <property type="match status" value="1"/>
</dbReference>
<dbReference type="SMART" id="SM00729">
    <property type="entry name" value="Elp3"/>
    <property type="match status" value="1"/>
</dbReference>
<dbReference type="SUPFAM" id="SSF55729">
    <property type="entry name" value="Acyl-CoA N-acyltransferases (Nat)"/>
    <property type="match status" value="1"/>
</dbReference>
<dbReference type="SUPFAM" id="SSF102114">
    <property type="entry name" value="Radical SAM enzymes"/>
    <property type="match status" value="1"/>
</dbReference>
<dbReference type="PROSITE" id="PS51186">
    <property type="entry name" value="GNAT"/>
    <property type="match status" value="1"/>
</dbReference>
<dbReference type="PROSITE" id="PS51918">
    <property type="entry name" value="RADICAL_SAM"/>
    <property type="match status" value="1"/>
</dbReference>
<keyword id="KW-0004">4Fe-4S</keyword>
<keyword id="KW-0012">Acyltransferase</keyword>
<keyword id="KW-0963">Cytoplasm</keyword>
<keyword id="KW-0408">Iron</keyword>
<keyword id="KW-0411">Iron-sulfur</keyword>
<keyword id="KW-0479">Metal-binding</keyword>
<keyword id="KW-0539">Nucleus</keyword>
<keyword id="KW-1185">Reference proteome</keyword>
<keyword id="KW-0694">RNA-binding</keyword>
<keyword id="KW-0949">S-adenosyl-L-methionine</keyword>
<keyword id="KW-0808">Transferase</keyword>
<keyword id="KW-0819">tRNA processing</keyword>
<keyword id="KW-0820">tRNA-binding</keyword>
<protein>
    <recommendedName>
        <fullName evidence="5">Elongator complex protein 3</fullName>
        <ecNumber evidence="2">2.3.1.311</ecNumber>
    </recommendedName>
    <alternativeName>
        <fullName evidence="8">tRNA uridine(34) acetyltransferase</fullName>
    </alternativeName>
</protein>
<name>ELP3_XENTR</name>
<organism>
    <name type="scientific">Xenopus tropicalis</name>
    <name type="common">Western clawed frog</name>
    <name type="synonym">Silurana tropicalis</name>
    <dbReference type="NCBI Taxonomy" id="8364"/>
    <lineage>
        <taxon>Eukaryota</taxon>
        <taxon>Metazoa</taxon>
        <taxon>Chordata</taxon>
        <taxon>Craniata</taxon>
        <taxon>Vertebrata</taxon>
        <taxon>Euteleostomi</taxon>
        <taxon>Amphibia</taxon>
        <taxon>Batrachia</taxon>
        <taxon>Anura</taxon>
        <taxon>Pipoidea</taxon>
        <taxon>Pipidae</taxon>
        <taxon>Xenopodinae</taxon>
        <taxon>Xenopus</taxon>
        <taxon>Silurana</taxon>
    </lineage>
</organism>
<reference key="1">
    <citation type="submission" date="2004-03" db="EMBL/GenBank/DDBJ databases">
        <authorList>
            <consortium name="NIH - Xenopus Gene Collection (XGC) project"/>
        </authorList>
    </citation>
    <scope>NUCLEOTIDE SEQUENCE [LARGE SCALE MRNA]</scope>
    <source>
        <tissue>Embryo</tissue>
    </source>
</reference>
<feature type="chain" id="PRO_0000283991" description="Elongator complex protein 3">
    <location>
        <begin position="1"/>
        <end position="549"/>
    </location>
</feature>
<feature type="domain" description="Radical SAM core" evidence="7">
    <location>
        <begin position="84"/>
        <end position="374"/>
    </location>
</feature>
<feature type="domain" description="N-acetyltransferase" evidence="6">
    <location>
        <begin position="398"/>
        <end position="549"/>
    </location>
</feature>
<feature type="binding site" evidence="3">
    <location>
        <position position="101"/>
    </location>
    <ligand>
        <name>[4Fe-4S] cluster</name>
        <dbReference type="ChEBI" id="CHEBI:49883"/>
        <note>4Fe-4S-S-AdoMet</note>
    </ligand>
</feature>
<feature type="binding site" evidence="3">
    <location>
        <position position="111"/>
    </location>
    <ligand>
        <name>[4Fe-4S] cluster</name>
        <dbReference type="ChEBI" id="CHEBI:49883"/>
        <note>4Fe-4S-S-AdoMet</note>
    </ligand>
</feature>
<feature type="binding site" evidence="3">
    <location>
        <position position="114"/>
    </location>
    <ligand>
        <name>[4Fe-4S] cluster</name>
        <dbReference type="ChEBI" id="CHEBI:49883"/>
        <note>4Fe-4S-S-AdoMet</note>
    </ligand>
</feature>
<feature type="binding site" evidence="1">
    <location>
        <position position="166"/>
    </location>
    <ligand>
        <name>acetyl-CoA</name>
        <dbReference type="ChEBI" id="CHEBI:57288"/>
    </ligand>
</feature>
<feature type="binding site" evidence="1">
    <location>
        <begin position="476"/>
        <end position="479"/>
    </location>
    <ligand>
        <name>acetyl-CoA</name>
        <dbReference type="ChEBI" id="CHEBI:57288"/>
    </ligand>
</feature>
<feature type="binding site" evidence="1">
    <location>
        <begin position="499"/>
        <end position="501"/>
    </location>
    <ligand>
        <name>acetyl-CoA</name>
        <dbReference type="ChEBI" id="CHEBI:57288"/>
    </ligand>
</feature>
<feature type="binding site" evidence="1">
    <location>
        <position position="532"/>
    </location>
    <ligand>
        <name>acetyl-CoA</name>
        <dbReference type="ChEBI" id="CHEBI:57288"/>
    </ligand>
</feature>